<protein>
    <recommendedName>
        <fullName evidence="1">Isocitrate dehydrogenase kinase/phosphatase</fullName>
        <shortName evidence="1">IDH kinase/phosphatase</shortName>
        <shortName evidence="1">IDHK/P</shortName>
        <ecNumber evidence="1">2.7.11.5</ecNumber>
        <ecNumber evidence="1">3.1.3.-</ecNumber>
    </recommendedName>
</protein>
<accession>Q328N5</accession>
<evidence type="ECO:0000255" key="1">
    <source>
        <dbReference type="HAMAP-Rule" id="MF_00747"/>
    </source>
</evidence>
<organism>
    <name type="scientific">Shigella dysenteriae serotype 1 (strain Sd197)</name>
    <dbReference type="NCBI Taxonomy" id="300267"/>
    <lineage>
        <taxon>Bacteria</taxon>
        <taxon>Pseudomonadati</taxon>
        <taxon>Pseudomonadota</taxon>
        <taxon>Gammaproteobacteria</taxon>
        <taxon>Enterobacterales</taxon>
        <taxon>Enterobacteriaceae</taxon>
        <taxon>Shigella</taxon>
    </lineage>
</organism>
<dbReference type="EC" id="2.7.11.5" evidence="1"/>
<dbReference type="EC" id="3.1.3.-" evidence="1"/>
<dbReference type="EMBL" id="CP000034">
    <property type="protein sequence ID" value="ABB64220.1"/>
    <property type="molecule type" value="Genomic_DNA"/>
</dbReference>
<dbReference type="RefSeq" id="WP_001137251.1">
    <property type="nucleotide sequence ID" value="NC_007606.1"/>
</dbReference>
<dbReference type="RefSeq" id="YP_405711.1">
    <property type="nucleotide sequence ID" value="NC_007606.1"/>
</dbReference>
<dbReference type="SMR" id="Q328N5"/>
<dbReference type="STRING" id="300267.SDY_4327"/>
<dbReference type="EnsemblBacteria" id="ABB64220">
    <property type="protein sequence ID" value="ABB64220"/>
    <property type="gene ID" value="SDY_4327"/>
</dbReference>
<dbReference type="KEGG" id="sdy:SDY_4327"/>
<dbReference type="PATRIC" id="fig|300267.13.peg.5107"/>
<dbReference type="HOGENOM" id="CLU_033804_1_1_6"/>
<dbReference type="Proteomes" id="UP000002716">
    <property type="component" value="Chromosome"/>
</dbReference>
<dbReference type="GO" id="GO:0005737">
    <property type="term" value="C:cytoplasm"/>
    <property type="evidence" value="ECO:0007669"/>
    <property type="project" value="UniProtKB-SubCell"/>
</dbReference>
<dbReference type="GO" id="GO:0008772">
    <property type="term" value="F:[isocitrate dehydrogenase (NADP+)] kinase activity"/>
    <property type="evidence" value="ECO:0007669"/>
    <property type="project" value="UniProtKB-UniRule"/>
</dbReference>
<dbReference type="GO" id="GO:0016208">
    <property type="term" value="F:AMP binding"/>
    <property type="evidence" value="ECO:0007669"/>
    <property type="project" value="TreeGrafter"/>
</dbReference>
<dbReference type="GO" id="GO:0005524">
    <property type="term" value="F:ATP binding"/>
    <property type="evidence" value="ECO:0007669"/>
    <property type="project" value="UniProtKB-UniRule"/>
</dbReference>
<dbReference type="GO" id="GO:0004721">
    <property type="term" value="F:phosphoprotein phosphatase activity"/>
    <property type="evidence" value="ECO:0007669"/>
    <property type="project" value="UniProtKB-KW"/>
</dbReference>
<dbReference type="GO" id="GO:0004674">
    <property type="term" value="F:protein serine/threonine kinase activity"/>
    <property type="evidence" value="ECO:0007669"/>
    <property type="project" value="UniProtKB-KW"/>
</dbReference>
<dbReference type="GO" id="GO:0006006">
    <property type="term" value="P:glucose metabolic process"/>
    <property type="evidence" value="ECO:0007669"/>
    <property type="project" value="InterPro"/>
</dbReference>
<dbReference type="GO" id="GO:0006097">
    <property type="term" value="P:glyoxylate cycle"/>
    <property type="evidence" value="ECO:0007669"/>
    <property type="project" value="UniProtKB-UniRule"/>
</dbReference>
<dbReference type="GO" id="GO:0006099">
    <property type="term" value="P:tricarboxylic acid cycle"/>
    <property type="evidence" value="ECO:0007669"/>
    <property type="project" value="UniProtKB-UniRule"/>
</dbReference>
<dbReference type="HAMAP" id="MF_00747">
    <property type="entry name" value="AceK"/>
    <property type="match status" value="1"/>
</dbReference>
<dbReference type="InterPro" id="IPR046855">
    <property type="entry name" value="AceK_kinase"/>
</dbReference>
<dbReference type="InterPro" id="IPR046854">
    <property type="entry name" value="AceK_regulatory"/>
</dbReference>
<dbReference type="InterPro" id="IPR010452">
    <property type="entry name" value="Isocitrate_DH_AceK"/>
</dbReference>
<dbReference type="NCBIfam" id="NF002804">
    <property type="entry name" value="PRK02946.1"/>
    <property type="match status" value="1"/>
</dbReference>
<dbReference type="PANTHER" id="PTHR39559">
    <property type="match status" value="1"/>
</dbReference>
<dbReference type="PANTHER" id="PTHR39559:SF1">
    <property type="entry name" value="ISOCITRATE DEHYDROGENASE KINASE_PHOSPHATASE"/>
    <property type="match status" value="1"/>
</dbReference>
<dbReference type="Pfam" id="PF06315">
    <property type="entry name" value="AceK_kinase"/>
    <property type="match status" value="1"/>
</dbReference>
<dbReference type="Pfam" id="PF20423">
    <property type="entry name" value="AceK_regulatory"/>
    <property type="match status" value="1"/>
</dbReference>
<dbReference type="PIRSF" id="PIRSF000719">
    <property type="entry name" value="AceK"/>
    <property type="match status" value="1"/>
</dbReference>
<proteinExistence type="inferred from homology"/>
<sequence length="578" mass="67712">MPRGLELLIAQTILQGFDAQYGRFLEVTSGAQQRFEQADWHAVQQAMKNRIHLYDHHVGLVVEQLRCITNGQSTDAEFLLRVKEHYTRLLPDYPRFEIAESFFNSVYCRLFDHRSLTPERLFIFSSQPERRFRTIPRPLAKDFYPEHGWEALLMRVLSDLPLRLPWQNKSRDINYIIRHLTETLGPENLSESHLQVANELFYRNKAAWLVGKLITPSGTLPFLLPIHQTDDGELFIDTCLTTTAEASIVFGFARSYFMVYAPLPAALVEWLREILPGKTTAELYMAIGCQKHAKTESYREYLVYLQGCNEQFIEAPGIRGMVMLVFTLPGFDRVFKVIKDRFAPQKEMSAAHVRACYQLVKEHDRVGRMADTQEFENFVLEKRHISPALMELLLQEAAEKITDLGEQIVIRHLYIERRMVPLNIWLEQVEGQQLRDAIEEYGNAIRQLAAANIFPGDMLFKNFGVTRHGRVVFYDYDEICYMTEVNFRDIPPPRYPEDELASEPWYSVSPGDVFPEEFRHWLCADPRIGPLFEEMHADLFRTDYWRALQNRIREGHVEDVYAYRRRQRFSVLYGEMLF</sequence>
<name>ACEK_SHIDS</name>
<feature type="chain" id="PRO_0000259158" description="Isocitrate dehydrogenase kinase/phosphatase">
    <location>
        <begin position="1"/>
        <end position="578"/>
    </location>
</feature>
<feature type="active site" evidence="1">
    <location>
        <position position="371"/>
    </location>
</feature>
<feature type="binding site" evidence="1">
    <location>
        <begin position="315"/>
        <end position="321"/>
    </location>
    <ligand>
        <name>ATP</name>
        <dbReference type="ChEBI" id="CHEBI:30616"/>
    </ligand>
</feature>
<feature type="binding site" evidence="1">
    <location>
        <position position="336"/>
    </location>
    <ligand>
        <name>ATP</name>
        <dbReference type="ChEBI" id="CHEBI:30616"/>
    </ligand>
</feature>
<comment type="function">
    <text evidence="1">Bifunctional enzyme which can phosphorylate or dephosphorylate isocitrate dehydrogenase (IDH) on a specific serine residue. This is a regulatory mechanism which enables bacteria to bypass the Krebs cycle via the glyoxylate shunt in response to the source of carbon. When bacteria are grown on glucose, IDH is fully active and unphosphorylated, but when grown on acetate or ethanol, the activity of IDH declines drastically concomitant with its phosphorylation.</text>
</comment>
<comment type="catalytic activity">
    <reaction evidence="1">
        <text>L-seryl-[isocitrate dehydrogenase] + ATP = O-phospho-L-seryl-[isocitrate dehydrogenase] + ADP + H(+)</text>
        <dbReference type="Rhea" id="RHEA:43540"/>
        <dbReference type="Rhea" id="RHEA-COMP:10605"/>
        <dbReference type="Rhea" id="RHEA-COMP:10606"/>
        <dbReference type="ChEBI" id="CHEBI:15378"/>
        <dbReference type="ChEBI" id="CHEBI:29999"/>
        <dbReference type="ChEBI" id="CHEBI:30616"/>
        <dbReference type="ChEBI" id="CHEBI:83421"/>
        <dbReference type="ChEBI" id="CHEBI:456216"/>
        <dbReference type="EC" id="2.7.11.5"/>
    </reaction>
</comment>
<comment type="subcellular location">
    <subcellularLocation>
        <location evidence="1">Cytoplasm</location>
    </subcellularLocation>
</comment>
<comment type="similarity">
    <text evidence="1">Belongs to the AceK family.</text>
</comment>
<keyword id="KW-0067">ATP-binding</keyword>
<keyword id="KW-0963">Cytoplasm</keyword>
<keyword id="KW-0329">Glyoxylate bypass</keyword>
<keyword id="KW-0378">Hydrolase</keyword>
<keyword id="KW-0418">Kinase</keyword>
<keyword id="KW-0547">Nucleotide-binding</keyword>
<keyword id="KW-0904">Protein phosphatase</keyword>
<keyword id="KW-1185">Reference proteome</keyword>
<keyword id="KW-0723">Serine/threonine-protein kinase</keyword>
<keyword id="KW-0808">Transferase</keyword>
<keyword id="KW-0816">Tricarboxylic acid cycle</keyword>
<gene>
    <name evidence="1" type="primary">aceK</name>
    <name type="ordered locus">SDY_4327</name>
</gene>
<reference key="1">
    <citation type="journal article" date="2005" name="Nucleic Acids Res.">
        <title>Genome dynamics and diversity of Shigella species, the etiologic agents of bacillary dysentery.</title>
        <authorList>
            <person name="Yang F."/>
            <person name="Yang J."/>
            <person name="Zhang X."/>
            <person name="Chen L."/>
            <person name="Jiang Y."/>
            <person name="Yan Y."/>
            <person name="Tang X."/>
            <person name="Wang J."/>
            <person name="Xiong Z."/>
            <person name="Dong J."/>
            <person name="Xue Y."/>
            <person name="Zhu Y."/>
            <person name="Xu X."/>
            <person name="Sun L."/>
            <person name="Chen S."/>
            <person name="Nie H."/>
            <person name="Peng J."/>
            <person name="Xu J."/>
            <person name="Wang Y."/>
            <person name="Yuan Z."/>
            <person name="Wen Y."/>
            <person name="Yao Z."/>
            <person name="Shen Y."/>
            <person name="Qiang B."/>
            <person name="Hou Y."/>
            <person name="Yu J."/>
            <person name="Jin Q."/>
        </authorList>
    </citation>
    <scope>NUCLEOTIDE SEQUENCE [LARGE SCALE GENOMIC DNA]</scope>
    <source>
        <strain>Sd197</strain>
    </source>
</reference>